<reference key="1">
    <citation type="journal article" date="2008" name="Infect. Immun.">
        <title>Genomic comparison of virulent Rickettsia rickettsii Sheila Smith and avirulent Rickettsia rickettsii Iowa.</title>
        <authorList>
            <person name="Ellison D.W."/>
            <person name="Clark T.R."/>
            <person name="Sturdevant D.E."/>
            <person name="Virtaneva K."/>
            <person name="Porcella S.F."/>
            <person name="Hackstadt T."/>
        </authorList>
    </citation>
    <scope>NUCLEOTIDE SEQUENCE [LARGE SCALE GENOMIC DNA]</scope>
    <source>
        <strain>Iowa</strain>
    </source>
</reference>
<name>GATA_RICRO</name>
<sequence>MTELNKLTVADSIKGLKNKDFTSAELIGAHIKQIEKHRNLNAYVTETFDLALKQAEAADQNYAQNNARTLEGIPFAAKDLFCTKGIRTTACSNILKNFIPNYESSVTQNIFDKGGVMLGKTNMDEFAMGSANITSCFGNVISPWKANDDNADLVPGGSSGGSAAAVSGFMASAALGSDTGGSVRQPASFTGLVGFKPTYGRCSRYGMISFASSLDQAGIFTRSVLDSSIMLEAMMGFDEKDSTSIKAEVPELQSAIGSSMKNMKMGVPLSLGEGSIIEPDIMKMWQDTIELLKNAGAEIVDITLPHAKYGVAVYYVIAPAEASSNLSRYDGVRYGLRVERENMTLDEMYEMTRSTGFGEEVKRRIMIGTYVLSSSGMDAYYLKAQKVRRLVANDFNNAFAKVDAILLPTSPTAAFKIGEKQNDPTIMYLNDLFTIPASLAGLPCASVPAGLSARGLPLGIQIIGKQLDEYTVLKVASTIESGVKHIKFEPKGF</sequence>
<dbReference type="EC" id="6.3.5.7" evidence="1"/>
<dbReference type="EMBL" id="CP000766">
    <property type="protein sequence ID" value="ABY72149.1"/>
    <property type="molecule type" value="Genomic_DNA"/>
</dbReference>
<dbReference type="RefSeq" id="WP_012150409.1">
    <property type="nucleotide sequence ID" value="NC_010263.3"/>
</dbReference>
<dbReference type="SMR" id="B0BWC3"/>
<dbReference type="GeneID" id="79936986"/>
<dbReference type="KEGG" id="rrj:RrIowa_0237"/>
<dbReference type="eggNOG" id="COG0154">
    <property type="taxonomic scope" value="Bacteria"/>
</dbReference>
<dbReference type="HOGENOM" id="CLU_009600_0_3_5"/>
<dbReference type="Proteomes" id="UP000000796">
    <property type="component" value="Chromosome"/>
</dbReference>
<dbReference type="GO" id="GO:0030956">
    <property type="term" value="C:glutamyl-tRNA(Gln) amidotransferase complex"/>
    <property type="evidence" value="ECO:0007669"/>
    <property type="project" value="InterPro"/>
</dbReference>
<dbReference type="GO" id="GO:0005524">
    <property type="term" value="F:ATP binding"/>
    <property type="evidence" value="ECO:0007669"/>
    <property type="project" value="UniProtKB-KW"/>
</dbReference>
<dbReference type="GO" id="GO:0050567">
    <property type="term" value="F:glutaminyl-tRNA synthase (glutamine-hydrolyzing) activity"/>
    <property type="evidence" value="ECO:0007669"/>
    <property type="project" value="UniProtKB-UniRule"/>
</dbReference>
<dbReference type="GO" id="GO:0006412">
    <property type="term" value="P:translation"/>
    <property type="evidence" value="ECO:0007669"/>
    <property type="project" value="UniProtKB-UniRule"/>
</dbReference>
<dbReference type="Gene3D" id="3.90.1300.10">
    <property type="entry name" value="Amidase signature (AS) domain"/>
    <property type="match status" value="1"/>
</dbReference>
<dbReference type="HAMAP" id="MF_00120">
    <property type="entry name" value="GatA"/>
    <property type="match status" value="1"/>
</dbReference>
<dbReference type="InterPro" id="IPR000120">
    <property type="entry name" value="Amidase"/>
</dbReference>
<dbReference type="InterPro" id="IPR020556">
    <property type="entry name" value="Amidase_CS"/>
</dbReference>
<dbReference type="InterPro" id="IPR023631">
    <property type="entry name" value="Amidase_dom"/>
</dbReference>
<dbReference type="InterPro" id="IPR036928">
    <property type="entry name" value="AS_sf"/>
</dbReference>
<dbReference type="InterPro" id="IPR004412">
    <property type="entry name" value="GatA"/>
</dbReference>
<dbReference type="NCBIfam" id="TIGR00132">
    <property type="entry name" value="gatA"/>
    <property type="match status" value="1"/>
</dbReference>
<dbReference type="PANTHER" id="PTHR11895:SF151">
    <property type="entry name" value="GLUTAMYL-TRNA(GLN) AMIDOTRANSFERASE SUBUNIT A"/>
    <property type="match status" value="1"/>
</dbReference>
<dbReference type="PANTHER" id="PTHR11895">
    <property type="entry name" value="TRANSAMIDASE"/>
    <property type="match status" value="1"/>
</dbReference>
<dbReference type="Pfam" id="PF01425">
    <property type="entry name" value="Amidase"/>
    <property type="match status" value="1"/>
</dbReference>
<dbReference type="SUPFAM" id="SSF75304">
    <property type="entry name" value="Amidase signature (AS) enzymes"/>
    <property type="match status" value="1"/>
</dbReference>
<dbReference type="PROSITE" id="PS00571">
    <property type="entry name" value="AMIDASES"/>
    <property type="match status" value="1"/>
</dbReference>
<organism>
    <name type="scientific">Rickettsia rickettsii (strain Iowa)</name>
    <dbReference type="NCBI Taxonomy" id="452659"/>
    <lineage>
        <taxon>Bacteria</taxon>
        <taxon>Pseudomonadati</taxon>
        <taxon>Pseudomonadota</taxon>
        <taxon>Alphaproteobacteria</taxon>
        <taxon>Rickettsiales</taxon>
        <taxon>Rickettsiaceae</taxon>
        <taxon>Rickettsieae</taxon>
        <taxon>Rickettsia</taxon>
        <taxon>spotted fever group</taxon>
    </lineage>
</organism>
<feature type="chain" id="PRO_1000076140" description="Glutamyl-tRNA(Gln) amidotransferase subunit A">
    <location>
        <begin position="1"/>
        <end position="493"/>
    </location>
</feature>
<feature type="active site" description="Charge relay system" evidence="1">
    <location>
        <position position="78"/>
    </location>
</feature>
<feature type="active site" description="Charge relay system" evidence="1">
    <location>
        <position position="158"/>
    </location>
</feature>
<feature type="active site" description="Acyl-ester intermediate" evidence="1">
    <location>
        <position position="182"/>
    </location>
</feature>
<gene>
    <name evidence="1" type="primary">gatA</name>
    <name type="ordered locus">RrIowa_0237</name>
</gene>
<accession>B0BWC3</accession>
<keyword id="KW-0067">ATP-binding</keyword>
<keyword id="KW-0436">Ligase</keyword>
<keyword id="KW-0547">Nucleotide-binding</keyword>
<keyword id="KW-0648">Protein biosynthesis</keyword>
<comment type="function">
    <text evidence="1">Allows the formation of correctly charged Gln-tRNA(Gln) through the transamidation of misacylated Glu-tRNA(Gln) in organisms which lack glutaminyl-tRNA synthetase. The reaction takes place in the presence of glutamine and ATP through an activated gamma-phospho-Glu-tRNA(Gln).</text>
</comment>
<comment type="catalytic activity">
    <reaction evidence="1">
        <text>L-glutamyl-tRNA(Gln) + L-glutamine + ATP + H2O = L-glutaminyl-tRNA(Gln) + L-glutamate + ADP + phosphate + H(+)</text>
        <dbReference type="Rhea" id="RHEA:17521"/>
        <dbReference type="Rhea" id="RHEA-COMP:9681"/>
        <dbReference type="Rhea" id="RHEA-COMP:9684"/>
        <dbReference type="ChEBI" id="CHEBI:15377"/>
        <dbReference type="ChEBI" id="CHEBI:15378"/>
        <dbReference type="ChEBI" id="CHEBI:29985"/>
        <dbReference type="ChEBI" id="CHEBI:30616"/>
        <dbReference type="ChEBI" id="CHEBI:43474"/>
        <dbReference type="ChEBI" id="CHEBI:58359"/>
        <dbReference type="ChEBI" id="CHEBI:78520"/>
        <dbReference type="ChEBI" id="CHEBI:78521"/>
        <dbReference type="ChEBI" id="CHEBI:456216"/>
        <dbReference type="EC" id="6.3.5.7"/>
    </reaction>
</comment>
<comment type="subunit">
    <text evidence="1">Heterotrimer of A, B and C subunits.</text>
</comment>
<comment type="similarity">
    <text evidence="1">Belongs to the amidase family. GatA subfamily.</text>
</comment>
<proteinExistence type="inferred from homology"/>
<protein>
    <recommendedName>
        <fullName evidence="1">Glutamyl-tRNA(Gln) amidotransferase subunit A</fullName>
        <shortName evidence="1">Glu-ADT subunit A</shortName>
        <ecNumber evidence="1">6.3.5.7</ecNumber>
    </recommendedName>
</protein>
<evidence type="ECO:0000255" key="1">
    <source>
        <dbReference type="HAMAP-Rule" id="MF_00120"/>
    </source>
</evidence>